<proteinExistence type="evidence at protein level"/>
<gene>
    <name type="primary">Msi2</name>
    <name type="synonym">Msi2h</name>
</gene>
<feature type="chain" id="PRO_0000081653" description="RNA-binding protein Musashi homolog 2">
    <location>
        <begin position="1"/>
        <end position="346"/>
    </location>
</feature>
<feature type="domain" description="RRM 1" evidence="2">
    <location>
        <begin position="21"/>
        <end position="111"/>
    </location>
</feature>
<feature type="domain" description="RRM 2" evidence="2">
    <location>
        <begin position="110"/>
        <end position="187"/>
    </location>
</feature>
<feature type="region of interest" description="Disordered" evidence="3">
    <location>
        <begin position="1"/>
        <end position="28"/>
    </location>
</feature>
<feature type="region of interest" description="Disordered" evidence="3">
    <location>
        <begin position="276"/>
        <end position="304"/>
    </location>
</feature>
<feature type="compositionally biased region" description="Polar residues" evidence="3">
    <location>
        <begin position="1"/>
        <end position="15"/>
    </location>
</feature>
<feature type="compositionally biased region" description="Low complexity" evidence="3">
    <location>
        <begin position="276"/>
        <end position="289"/>
    </location>
</feature>
<feature type="modified residue" description="N-acetylmethionine" evidence="1">
    <location>
        <position position="1"/>
    </location>
</feature>
<feature type="modified residue" description="Phosphoserine" evidence="1">
    <location>
        <position position="6"/>
    </location>
</feature>
<feature type="modified residue" description="Omega-N-methylarginine" evidence="10">
    <location>
        <position position="228"/>
    </location>
</feature>
<feature type="modified residue" description="Omega-N-methylarginine" evidence="10">
    <location>
        <position position="261"/>
    </location>
</feature>
<feature type="splice variant" id="VSP_011172" description="In isoform 3." evidence="8">
    <original>VLNSYSAQPNFGAPASPAG</original>
    <variation>GRKVYGAGGSQACLVCRGR</variation>
    <location>
        <begin position="264"/>
        <end position="282"/>
    </location>
</feature>
<feature type="splice variant" id="VSP_011173" description="In isoform 2." evidence="7">
    <location>
        <begin position="264"/>
        <end position="281"/>
    </location>
</feature>
<feature type="splice variant" id="VSP_011174" description="In isoform 3." evidence="8">
    <location>
        <begin position="283"/>
        <end position="346"/>
    </location>
</feature>
<name>MSI2H_MOUSE</name>
<keyword id="KW-0007">Acetylation</keyword>
<keyword id="KW-0025">Alternative splicing</keyword>
<keyword id="KW-0963">Cytoplasm</keyword>
<keyword id="KW-0488">Methylation</keyword>
<keyword id="KW-0597">Phosphoprotein</keyword>
<keyword id="KW-1185">Reference proteome</keyword>
<keyword id="KW-0677">Repeat</keyword>
<keyword id="KW-0694">RNA-binding</keyword>
<keyword id="KW-0832">Ubl conjugation</keyword>
<evidence type="ECO:0000250" key="1">
    <source>
        <dbReference type="UniProtKB" id="Q96DH6"/>
    </source>
</evidence>
<evidence type="ECO:0000255" key="2">
    <source>
        <dbReference type="PROSITE-ProRule" id="PRU00176"/>
    </source>
</evidence>
<evidence type="ECO:0000256" key="3">
    <source>
        <dbReference type="SAM" id="MobiDB-lite"/>
    </source>
</evidence>
<evidence type="ECO:0000269" key="4">
    <source>
    </source>
</evidence>
<evidence type="ECO:0000269" key="5">
    <source>
    </source>
</evidence>
<evidence type="ECO:0000269" key="6">
    <source>
    </source>
</evidence>
<evidence type="ECO:0000303" key="7">
    <source>
    </source>
</evidence>
<evidence type="ECO:0000303" key="8">
    <source>
    </source>
</evidence>
<evidence type="ECO:0000305" key="9"/>
<evidence type="ECO:0007744" key="10">
    <source>
    </source>
</evidence>
<reference key="1">
    <citation type="journal article" date="2001" name="J. Neurosci.">
        <title>RNA-binding protein Musashi2: developmentally regulated expression in neural precursor cells and subpopulations of neurons in mammalian CNS.</title>
        <authorList>
            <person name="Sakakibara S."/>
            <person name="Nakamura Y."/>
            <person name="Satoh H."/>
            <person name="Okano H."/>
        </authorList>
    </citation>
    <scope>NUCLEOTIDE SEQUENCE [MRNA] (ISOFORMS 1 AND 2)</scope>
    <scope>FUNCTION</scope>
    <scope>PHOSPHORYLATION</scope>
    <scope>INDUCTION</scope>
    <scope>SUBCELLULAR LOCATION</scope>
    <scope>TISSUE SPECIFICITY</scope>
    <source>
        <strain>C57BL/6J</strain>
        <strain>ICR</strain>
        <tissue>Brain</tissue>
    </source>
</reference>
<reference key="2">
    <citation type="journal article" date="2003" name="Proc. Natl. Acad. Sci. U.S.A.">
        <title>Screening for mammalian neural genes via fluorescence-activated cell sorter purification of neural precursors from Sox1-gfp knock-in mice.</title>
        <authorList>
            <person name="Aubert J."/>
            <person name="Stavridis M.P."/>
            <person name="Tweedie S."/>
            <person name="O'Reilly M."/>
            <person name="Vierlinger K."/>
            <person name="Li M."/>
            <person name="Ghazal P."/>
            <person name="Pratt T."/>
            <person name="Mason J.O."/>
            <person name="Roy D."/>
            <person name="Smith A."/>
        </authorList>
    </citation>
    <scope>NUCLEOTIDE SEQUENCE [MRNA] (ISOFORM 1)</scope>
    <scope>TISSUE SPECIFICITY</scope>
    <source>
        <strain>129/Ola</strain>
        <tissue>Embryo</tissue>
    </source>
</reference>
<reference key="3">
    <citation type="journal article" date="2005" name="Science">
        <title>The transcriptional landscape of the mammalian genome.</title>
        <authorList>
            <person name="Carninci P."/>
            <person name="Kasukawa T."/>
            <person name="Katayama S."/>
            <person name="Gough J."/>
            <person name="Frith M.C."/>
            <person name="Maeda N."/>
            <person name="Oyama R."/>
            <person name="Ravasi T."/>
            <person name="Lenhard B."/>
            <person name="Wells C."/>
            <person name="Kodzius R."/>
            <person name="Shimokawa K."/>
            <person name="Bajic V.B."/>
            <person name="Brenner S.E."/>
            <person name="Batalov S."/>
            <person name="Forrest A.R."/>
            <person name="Zavolan M."/>
            <person name="Davis M.J."/>
            <person name="Wilming L.G."/>
            <person name="Aidinis V."/>
            <person name="Allen J.E."/>
            <person name="Ambesi-Impiombato A."/>
            <person name="Apweiler R."/>
            <person name="Aturaliya R.N."/>
            <person name="Bailey T.L."/>
            <person name="Bansal M."/>
            <person name="Baxter L."/>
            <person name="Beisel K.W."/>
            <person name="Bersano T."/>
            <person name="Bono H."/>
            <person name="Chalk A.M."/>
            <person name="Chiu K.P."/>
            <person name="Choudhary V."/>
            <person name="Christoffels A."/>
            <person name="Clutterbuck D.R."/>
            <person name="Crowe M.L."/>
            <person name="Dalla E."/>
            <person name="Dalrymple B.P."/>
            <person name="de Bono B."/>
            <person name="Della Gatta G."/>
            <person name="di Bernardo D."/>
            <person name="Down T."/>
            <person name="Engstrom P."/>
            <person name="Fagiolini M."/>
            <person name="Faulkner G."/>
            <person name="Fletcher C.F."/>
            <person name="Fukushima T."/>
            <person name="Furuno M."/>
            <person name="Futaki S."/>
            <person name="Gariboldi M."/>
            <person name="Georgii-Hemming P."/>
            <person name="Gingeras T.R."/>
            <person name="Gojobori T."/>
            <person name="Green R.E."/>
            <person name="Gustincich S."/>
            <person name="Harbers M."/>
            <person name="Hayashi Y."/>
            <person name="Hensch T.K."/>
            <person name="Hirokawa N."/>
            <person name="Hill D."/>
            <person name="Huminiecki L."/>
            <person name="Iacono M."/>
            <person name="Ikeo K."/>
            <person name="Iwama A."/>
            <person name="Ishikawa T."/>
            <person name="Jakt M."/>
            <person name="Kanapin A."/>
            <person name="Katoh M."/>
            <person name="Kawasawa Y."/>
            <person name="Kelso J."/>
            <person name="Kitamura H."/>
            <person name="Kitano H."/>
            <person name="Kollias G."/>
            <person name="Krishnan S.P."/>
            <person name="Kruger A."/>
            <person name="Kummerfeld S.K."/>
            <person name="Kurochkin I.V."/>
            <person name="Lareau L.F."/>
            <person name="Lazarevic D."/>
            <person name="Lipovich L."/>
            <person name="Liu J."/>
            <person name="Liuni S."/>
            <person name="McWilliam S."/>
            <person name="Madan Babu M."/>
            <person name="Madera M."/>
            <person name="Marchionni L."/>
            <person name="Matsuda H."/>
            <person name="Matsuzawa S."/>
            <person name="Miki H."/>
            <person name="Mignone F."/>
            <person name="Miyake S."/>
            <person name="Morris K."/>
            <person name="Mottagui-Tabar S."/>
            <person name="Mulder N."/>
            <person name="Nakano N."/>
            <person name="Nakauchi H."/>
            <person name="Ng P."/>
            <person name="Nilsson R."/>
            <person name="Nishiguchi S."/>
            <person name="Nishikawa S."/>
            <person name="Nori F."/>
            <person name="Ohara O."/>
            <person name="Okazaki Y."/>
            <person name="Orlando V."/>
            <person name="Pang K.C."/>
            <person name="Pavan W.J."/>
            <person name="Pavesi G."/>
            <person name="Pesole G."/>
            <person name="Petrovsky N."/>
            <person name="Piazza S."/>
            <person name="Reed J."/>
            <person name="Reid J.F."/>
            <person name="Ring B.Z."/>
            <person name="Ringwald M."/>
            <person name="Rost B."/>
            <person name="Ruan Y."/>
            <person name="Salzberg S.L."/>
            <person name="Sandelin A."/>
            <person name="Schneider C."/>
            <person name="Schoenbach C."/>
            <person name="Sekiguchi K."/>
            <person name="Semple C.A."/>
            <person name="Seno S."/>
            <person name="Sessa L."/>
            <person name="Sheng Y."/>
            <person name="Shibata Y."/>
            <person name="Shimada H."/>
            <person name="Shimada K."/>
            <person name="Silva D."/>
            <person name="Sinclair B."/>
            <person name="Sperling S."/>
            <person name="Stupka E."/>
            <person name="Sugiura K."/>
            <person name="Sultana R."/>
            <person name="Takenaka Y."/>
            <person name="Taki K."/>
            <person name="Tammoja K."/>
            <person name="Tan S.L."/>
            <person name="Tang S."/>
            <person name="Taylor M.S."/>
            <person name="Tegner J."/>
            <person name="Teichmann S.A."/>
            <person name="Ueda H.R."/>
            <person name="van Nimwegen E."/>
            <person name="Verardo R."/>
            <person name="Wei C.L."/>
            <person name="Yagi K."/>
            <person name="Yamanishi H."/>
            <person name="Zabarovsky E."/>
            <person name="Zhu S."/>
            <person name="Zimmer A."/>
            <person name="Hide W."/>
            <person name="Bult C."/>
            <person name="Grimmond S.M."/>
            <person name="Teasdale R.D."/>
            <person name="Liu E.T."/>
            <person name="Brusic V."/>
            <person name="Quackenbush J."/>
            <person name="Wahlestedt C."/>
            <person name="Mattick J.S."/>
            <person name="Hume D.A."/>
            <person name="Kai C."/>
            <person name="Sasaki D."/>
            <person name="Tomaru Y."/>
            <person name="Fukuda S."/>
            <person name="Kanamori-Katayama M."/>
            <person name="Suzuki M."/>
            <person name="Aoki J."/>
            <person name="Arakawa T."/>
            <person name="Iida J."/>
            <person name="Imamura K."/>
            <person name="Itoh M."/>
            <person name="Kato T."/>
            <person name="Kawaji H."/>
            <person name="Kawagashira N."/>
            <person name="Kawashima T."/>
            <person name="Kojima M."/>
            <person name="Kondo S."/>
            <person name="Konno H."/>
            <person name="Nakano K."/>
            <person name="Ninomiya N."/>
            <person name="Nishio T."/>
            <person name="Okada M."/>
            <person name="Plessy C."/>
            <person name="Shibata K."/>
            <person name="Shiraki T."/>
            <person name="Suzuki S."/>
            <person name="Tagami M."/>
            <person name="Waki K."/>
            <person name="Watahiki A."/>
            <person name="Okamura-Oho Y."/>
            <person name="Suzuki H."/>
            <person name="Kawai J."/>
            <person name="Hayashizaki Y."/>
        </authorList>
    </citation>
    <scope>NUCLEOTIDE SEQUENCE [LARGE SCALE MRNA] (ISOFORMS 1 AND 3)</scope>
    <source>
        <strain>C57BL/6J</strain>
        <strain>ICR</strain>
        <tissue>Brain</tissue>
        <tissue>Spinal ganglion</tissue>
    </source>
</reference>
<reference key="4">
    <citation type="journal article" date="2002" name="Proc. Natl. Acad. Sci. U.S.A.">
        <title>RNA-binding protein Musashi family: roles for CNS stem cells and a subpopulation of ependymal cells revealed by targeted disruption and antisense ablation.</title>
        <authorList>
            <person name="Sakakibara S."/>
            <person name="Nakamura Y."/>
            <person name="Yoshida T."/>
            <person name="Shibata S."/>
            <person name="Koike M."/>
            <person name="Takano H."/>
            <person name="Ueda S."/>
            <person name="Uchiyama Y."/>
            <person name="Noda T."/>
            <person name="Okano H."/>
        </authorList>
    </citation>
    <scope>FUNCTION</scope>
</reference>
<reference key="5">
    <citation type="journal article" date="2010" name="Cell">
        <title>A tissue-specific atlas of mouse protein phosphorylation and expression.</title>
        <authorList>
            <person name="Huttlin E.L."/>
            <person name="Jedrychowski M.P."/>
            <person name="Elias J.E."/>
            <person name="Goswami T."/>
            <person name="Rad R."/>
            <person name="Beausoleil S.A."/>
            <person name="Villen J."/>
            <person name="Haas W."/>
            <person name="Sowa M.E."/>
            <person name="Gygi S.P."/>
        </authorList>
    </citation>
    <scope>IDENTIFICATION BY MASS SPECTROMETRY [LARGE SCALE ANALYSIS]</scope>
    <source>
        <tissue>Brain</tissue>
        <tissue>Brown adipose tissue</tissue>
        <tissue>Heart</tissue>
        <tissue>Kidney</tissue>
        <tissue>Lung</tissue>
        <tissue>Pancreas</tissue>
        <tissue>Spleen</tissue>
        <tissue>Testis</tissue>
    </source>
</reference>
<reference key="6">
    <citation type="journal article" date="2014" name="Mol. Cell. Proteomics">
        <title>Immunoaffinity enrichment and mass spectrometry analysis of protein methylation.</title>
        <authorList>
            <person name="Guo A."/>
            <person name="Gu H."/>
            <person name="Zhou J."/>
            <person name="Mulhern D."/>
            <person name="Wang Y."/>
            <person name="Lee K.A."/>
            <person name="Yang V."/>
            <person name="Aguiar M."/>
            <person name="Kornhauser J."/>
            <person name="Jia X."/>
            <person name="Ren J."/>
            <person name="Beausoleil S.A."/>
            <person name="Silva J.C."/>
            <person name="Vemulapalli V."/>
            <person name="Bedford M.T."/>
            <person name="Comb M.J."/>
        </authorList>
    </citation>
    <scope>METHYLATION [LARGE SCALE ANALYSIS] AT ARG-228 AND ARG-261</scope>
    <scope>IDENTIFICATION BY MASS SPECTROMETRY [LARGE SCALE ANALYSIS]</scope>
    <source>
        <tissue>Brain</tissue>
        <tissue>Embryo</tissue>
    </source>
</reference>
<sequence>MEANGSPGTSGSANDSQHDPGKMFIGGLSWQTSPDSLRDYFSKFGEIRECMVMRDPTTKRSRGFGFVTFADPASVDKVLGQPHHELDSKTIDPKVAFPRRAQPKMVTRTKKIFVGGLSANTVVEDVKQYFEQFGKVEDAMLMFDKTTNRHRGFGFVTFENEDVVEKVCEIHFHEINNKMVECKKAQPKEVMFPPGTRGRARGLPYTMDAFMLGMGMLGYPNFVATYGRGYPGFAPSYGYQFPGFPAAAYGPVAAAAVAAARGSVLNSYSAQPNFGAPASPAGSNPARPGGFPGANSPGPVADLYGPASQDSGVGNYISAASPQPGSGFGHGIAGPLIATAFTNGYH</sequence>
<protein>
    <recommendedName>
        <fullName>RNA-binding protein Musashi homolog 2</fullName>
        <shortName>Musashi-2</shortName>
    </recommendedName>
</protein>
<comment type="function">
    <text evidence="4 5">RNA binding protein that regulates the expression of target mRNAs at the translation level. May play a role in the proliferation and maintenance of stem cells in the central nervous system.</text>
</comment>
<comment type="subunit">
    <text evidence="1">Interacts with RHOBTB2; the interaction is necessary for MSI2 ubiquitination and degradation.</text>
</comment>
<comment type="subcellular location">
    <subcellularLocation>
        <location evidence="4">Cytoplasm</location>
    </subcellularLocation>
    <text>Associated with polysomes.</text>
</comment>
<comment type="alternative products">
    <event type="alternative splicing"/>
    <isoform>
        <id>Q920Q6-1</id>
        <name>1</name>
        <name>Msi2L</name>
        <sequence type="displayed"/>
    </isoform>
    <isoform>
        <id>Q920Q6-2</id>
        <name>2</name>
        <name>Msi2S</name>
        <sequence type="described" ref="VSP_011173"/>
    </isoform>
    <isoform>
        <id>Q920Q6-3</id>
        <name>3</name>
        <sequence type="described" ref="VSP_011172 VSP_011174"/>
    </isoform>
</comment>
<comment type="tissue specificity">
    <text evidence="4 6">Ubiquitous. Expressed in proliferating neural precursor cells.</text>
</comment>
<comment type="induction">
    <text evidence="4">Up-regulated in astrocytes after brain injury.</text>
</comment>
<comment type="PTM">
    <text evidence="1 4">Phosphorylated (PubMed:11588182). Ubiquitinated by the RHOBTB2-CUL3-RBX1 ubiquitin ligase complex (By similarity).</text>
</comment>
<comment type="similarity">
    <text evidence="9">Belongs to the Musashi family.</text>
</comment>
<dbReference type="EMBL" id="AB056102">
    <property type="protein sequence ID" value="BAB69484.1"/>
    <property type="molecule type" value="mRNA"/>
</dbReference>
<dbReference type="EMBL" id="AB056103">
    <property type="protein sequence ID" value="BAB69485.1"/>
    <property type="molecule type" value="mRNA"/>
</dbReference>
<dbReference type="EMBL" id="BK001483">
    <property type="protein sequence ID" value="DAA01567.1"/>
    <property type="molecule type" value="mRNA"/>
</dbReference>
<dbReference type="EMBL" id="AK049637">
    <property type="protein sequence ID" value="BAC33851.1"/>
    <property type="molecule type" value="mRNA"/>
</dbReference>
<dbReference type="EMBL" id="AK049688">
    <property type="protein sequence ID" value="BAC33873.1"/>
    <property type="molecule type" value="mRNA"/>
</dbReference>
<dbReference type="EMBL" id="AK051269">
    <property type="protein sequence ID" value="BAC34584.1"/>
    <property type="molecule type" value="mRNA"/>
</dbReference>
<dbReference type="CCDS" id="CCDS56796.1">
    <molecule id="Q920Q6-1"/>
</dbReference>
<dbReference type="CCDS" id="CCDS88217.1">
    <molecule id="Q920Q6-2"/>
</dbReference>
<dbReference type="RefSeq" id="NP_001350124.1">
    <molecule id="Q920Q6-2"/>
    <property type="nucleotide sequence ID" value="NM_001363195.1"/>
</dbReference>
<dbReference type="RefSeq" id="NP_473384.1">
    <molecule id="Q920Q6-1"/>
    <property type="nucleotide sequence ID" value="NM_054043.3"/>
</dbReference>
<dbReference type="RefSeq" id="XP_006534505.1">
    <property type="nucleotide sequence ID" value="XM_006534442.3"/>
</dbReference>
<dbReference type="SMR" id="Q920Q6"/>
<dbReference type="BioGRID" id="218215">
    <property type="interactions" value="10"/>
</dbReference>
<dbReference type="FunCoup" id="Q920Q6">
    <property type="interactions" value="2780"/>
</dbReference>
<dbReference type="IntAct" id="Q920Q6">
    <property type="interactions" value="3"/>
</dbReference>
<dbReference type="STRING" id="10090.ENSMUSP00000090470"/>
<dbReference type="GlyGen" id="Q920Q6">
    <property type="glycosylation" value="2 sites, 1 N-linked glycan (1 site), 1 O-linked glycan (1 site)"/>
</dbReference>
<dbReference type="iPTMnet" id="Q920Q6"/>
<dbReference type="PhosphoSitePlus" id="Q920Q6"/>
<dbReference type="PaxDb" id="10090-ENSMUSP00000103541"/>
<dbReference type="ProteomicsDB" id="291354">
    <molecule id="Q920Q6-1"/>
</dbReference>
<dbReference type="ProteomicsDB" id="291355">
    <molecule id="Q920Q6-2"/>
</dbReference>
<dbReference type="ProteomicsDB" id="291356">
    <molecule id="Q920Q6-3"/>
</dbReference>
<dbReference type="Pumba" id="Q920Q6"/>
<dbReference type="Antibodypedia" id="18327">
    <property type="antibodies" value="417 antibodies from 41 providers"/>
</dbReference>
<dbReference type="DNASU" id="76626"/>
<dbReference type="Ensembl" id="ENSMUST00000092794.12">
    <molecule id="Q920Q6-1"/>
    <property type="protein sequence ID" value="ENSMUSP00000090470.6"/>
    <property type="gene ID" value="ENSMUSG00000069769.14"/>
</dbReference>
<dbReference type="Ensembl" id="ENSMUST00000107909.8">
    <molecule id="Q920Q6-2"/>
    <property type="protein sequence ID" value="ENSMUSP00000103542.2"/>
    <property type="gene ID" value="ENSMUSG00000069769.14"/>
</dbReference>
<dbReference type="GeneID" id="76626"/>
<dbReference type="KEGG" id="mmu:76626"/>
<dbReference type="UCSC" id="uc007kvl.2">
    <molecule id="Q920Q6-1"/>
    <property type="organism name" value="mouse"/>
</dbReference>
<dbReference type="UCSC" id="uc007kvn.2">
    <molecule id="Q920Q6-3"/>
    <property type="organism name" value="mouse"/>
</dbReference>
<dbReference type="AGR" id="MGI:1923876"/>
<dbReference type="CTD" id="124540"/>
<dbReference type="MGI" id="MGI:1923876">
    <property type="gene designation" value="Msi2"/>
</dbReference>
<dbReference type="VEuPathDB" id="HostDB:ENSMUSG00000069769"/>
<dbReference type="eggNOG" id="KOG4205">
    <property type="taxonomic scope" value="Eukaryota"/>
</dbReference>
<dbReference type="GeneTree" id="ENSGT00940000155420"/>
<dbReference type="HOGENOM" id="CLU_012062_3_0_1"/>
<dbReference type="InParanoid" id="Q920Q6"/>
<dbReference type="OMA" id="RAGASPX"/>
<dbReference type="OrthoDB" id="1875751at2759"/>
<dbReference type="PhylomeDB" id="Q920Q6"/>
<dbReference type="Reactome" id="R-MMU-9013418">
    <property type="pathway name" value="RHOBTB2 GTPase cycle"/>
</dbReference>
<dbReference type="BioGRID-ORCS" id="76626">
    <property type="hits" value="4 hits in 80 CRISPR screens"/>
</dbReference>
<dbReference type="ChiTaRS" id="Msi2">
    <property type="organism name" value="mouse"/>
</dbReference>
<dbReference type="PRO" id="PR:Q920Q6"/>
<dbReference type="Proteomes" id="UP000000589">
    <property type="component" value="Chromosome 11"/>
</dbReference>
<dbReference type="RNAct" id="Q920Q6">
    <property type="molecule type" value="protein"/>
</dbReference>
<dbReference type="Bgee" id="ENSMUSG00000069769">
    <property type="expression patterns" value="Expressed in rostral migratory stream and 225 other cell types or tissues"/>
</dbReference>
<dbReference type="ExpressionAtlas" id="Q920Q6">
    <property type="expression patterns" value="baseline and differential"/>
</dbReference>
<dbReference type="GO" id="GO:0005737">
    <property type="term" value="C:cytoplasm"/>
    <property type="evidence" value="ECO:0000314"/>
    <property type="project" value="MGI"/>
</dbReference>
<dbReference type="GO" id="GO:0005829">
    <property type="term" value="C:cytosol"/>
    <property type="evidence" value="ECO:0007669"/>
    <property type="project" value="Ensembl"/>
</dbReference>
<dbReference type="GO" id="GO:0043231">
    <property type="term" value="C:intracellular membrane-bounded organelle"/>
    <property type="evidence" value="ECO:0007669"/>
    <property type="project" value="Ensembl"/>
</dbReference>
<dbReference type="GO" id="GO:0042802">
    <property type="term" value="F:identical protein binding"/>
    <property type="evidence" value="ECO:0007669"/>
    <property type="project" value="Ensembl"/>
</dbReference>
<dbReference type="GO" id="GO:0008266">
    <property type="term" value="F:poly(U) RNA binding"/>
    <property type="evidence" value="ECO:0000314"/>
    <property type="project" value="MGI"/>
</dbReference>
<dbReference type="GO" id="GO:0003727">
    <property type="term" value="F:single-stranded RNA binding"/>
    <property type="evidence" value="ECO:0000314"/>
    <property type="project" value="MGI"/>
</dbReference>
<dbReference type="GO" id="GO:0048864">
    <property type="term" value="P:stem cell development"/>
    <property type="evidence" value="ECO:0000315"/>
    <property type="project" value="UniProtKB"/>
</dbReference>
<dbReference type="CDD" id="cd12760">
    <property type="entry name" value="RRM1_MSI2"/>
    <property type="match status" value="1"/>
</dbReference>
<dbReference type="CDD" id="cd12323">
    <property type="entry name" value="RRM2_MSI"/>
    <property type="match status" value="1"/>
</dbReference>
<dbReference type="FunFam" id="3.30.70.330:FF:000020">
    <property type="entry name" value="RNA-binding protein Musashi homolog 2 isoform X1"/>
    <property type="match status" value="1"/>
</dbReference>
<dbReference type="FunFam" id="3.30.70.330:FF:000025">
    <property type="entry name" value="RNA-binding protein Musashi homolog 2 isoform X1"/>
    <property type="match status" value="1"/>
</dbReference>
<dbReference type="Gene3D" id="3.30.70.330">
    <property type="match status" value="2"/>
</dbReference>
<dbReference type="InterPro" id="IPR034126">
    <property type="entry name" value="MSI_RRM2"/>
</dbReference>
<dbReference type="InterPro" id="IPR012677">
    <property type="entry name" value="Nucleotide-bd_a/b_plait_sf"/>
</dbReference>
<dbReference type="InterPro" id="IPR035979">
    <property type="entry name" value="RBD_domain_sf"/>
</dbReference>
<dbReference type="InterPro" id="IPR000504">
    <property type="entry name" value="RRM_dom"/>
</dbReference>
<dbReference type="PANTHER" id="PTHR48032:SF10">
    <property type="entry name" value="RNA-BINDING PROTEIN MUSASHI HOMOLOG 2"/>
    <property type="match status" value="1"/>
</dbReference>
<dbReference type="PANTHER" id="PTHR48032">
    <property type="entry name" value="RNA-BINDING PROTEIN MUSASHI HOMOLOG RBP6"/>
    <property type="match status" value="1"/>
</dbReference>
<dbReference type="Pfam" id="PF00076">
    <property type="entry name" value="RRM_1"/>
    <property type="match status" value="2"/>
</dbReference>
<dbReference type="SMART" id="SM00360">
    <property type="entry name" value="RRM"/>
    <property type="match status" value="2"/>
</dbReference>
<dbReference type="SUPFAM" id="SSF54928">
    <property type="entry name" value="RNA-binding domain, RBD"/>
    <property type="match status" value="2"/>
</dbReference>
<dbReference type="PROSITE" id="PS50102">
    <property type="entry name" value="RRM"/>
    <property type="match status" value="2"/>
</dbReference>
<organism>
    <name type="scientific">Mus musculus</name>
    <name type="common">Mouse</name>
    <dbReference type="NCBI Taxonomy" id="10090"/>
    <lineage>
        <taxon>Eukaryota</taxon>
        <taxon>Metazoa</taxon>
        <taxon>Chordata</taxon>
        <taxon>Craniata</taxon>
        <taxon>Vertebrata</taxon>
        <taxon>Euteleostomi</taxon>
        <taxon>Mammalia</taxon>
        <taxon>Eutheria</taxon>
        <taxon>Euarchontoglires</taxon>
        <taxon>Glires</taxon>
        <taxon>Rodentia</taxon>
        <taxon>Myomorpha</taxon>
        <taxon>Muroidea</taxon>
        <taxon>Muridae</taxon>
        <taxon>Murinae</taxon>
        <taxon>Mus</taxon>
        <taxon>Mus</taxon>
    </lineage>
</organism>
<accession>Q920Q6</accession>
<accession>Q8BQ90</accession>
<accession>Q920Q7</accession>